<geneLocation type="mitochondrion"/>
<organism>
    <name type="scientific">Synthliboramphus wumizusume</name>
    <name type="common">Japanese murrelet</name>
    <name type="synonym">Uria wumizusume</name>
    <dbReference type="NCBI Taxonomy" id="28710"/>
    <lineage>
        <taxon>Eukaryota</taxon>
        <taxon>Metazoa</taxon>
        <taxon>Chordata</taxon>
        <taxon>Craniata</taxon>
        <taxon>Vertebrata</taxon>
        <taxon>Euteleostomi</taxon>
        <taxon>Archelosauria</taxon>
        <taxon>Archosauria</taxon>
        <taxon>Dinosauria</taxon>
        <taxon>Saurischia</taxon>
        <taxon>Theropoda</taxon>
        <taxon>Coelurosauria</taxon>
        <taxon>Aves</taxon>
        <taxon>Neognathae</taxon>
        <taxon>Neoaves</taxon>
        <taxon>Charadriiformes</taxon>
        <taxon>Alcidae</taxon>
        <taxon>Synthliboramphus</taxon>
    </lineage>
</organism>
<protein>
    <recommendedName>
        <fullName>NADH-ubiquinone oxidoreductase chain 6</fullName>
        <ecNumber>7.1.1.2</ecNumber>
    </recommendedName>
    <alternativeName>
        <fullName>NADH dehydrogenase subunit 6</fullName>
    </alternativeName>
</protein>
<accession>P43206</accession>
<reference key="1">
    <citation type="journal article" date="1994" name="Curr. Genet.">
        <title>Intragenic rearrangements in the mitochondrial NADH dehydrogenase subunit 6 gene of vertebrates.</title>
        <authorList>
            <person name="Moum T."/>
            <person name="Willassen N.P."/>
            <person name="Johansen S."/>
        </authorList>
    </citation>
    <scope>NUCLEOTIDE SEQUENCE [GENOMIC DNA]</scope>
</reference>
<proteinExistence type="inferred from homology"/>
<comment type="function">
    <text evidence="1">Core subunit of the mitochondrial membrane respiratory chain NADH dehydrogenase (Complex I) that is believed to belong to the minimal assembly required for catalysis. Complex I functions in the transfer of electrons from NADH to the respiratory chain. The immediate electron acceptor for the enzyme is believed to be ubiquinone (By similarity).</text>
</comment>
<comment type="catalytic activity">
    <reaction>
        <text>a ubiquinone + NADH + 5 H(+)(in) = a ubiquinol + NAD(+) + 4 H(+)(out)</text>
        <dbReference type="Rhea" id="RHEA:29091"/>
        <dbReference type="Rhea" id="RHEA-COMP:9565"/>
        <dbReference type="Rhea" id="RHEA-COMP:9566"/>
        <dbReference type="ChEBI" id="CHEBI:15378"/>
        <dbReference type="ChEBI" id="CHEBI:16389"/>
        <dbReference type="ChEBI" id="CHEBI:17976"/>
        <dbReference type="ChEBI" id="CHEBI:57540"/>
        <dbReference type="ChEBI" id="CHEBI:57945"/>
        <dbReference type="EC" id="7.1.1.2"/>
    </reaction>
</comment>
<comment type="subcellular location">
    <subcellularLocation>
        <location evidence="3">Mitochondrion membrane</location>
        <topology evidence="3">Multi-pass membrane protein</topology>
    </subcellularLocation>
</comment>
<comment type="similarity">
    <text evidence="3">Belongs to the complex I subunit 6 family.</text>
</comment>
<evidence type="ECO:0000250" key="1"/>
<evidence type="ECO:0000255" key="2"/>
<evidence type="ECO:0000305" key="3"/>
<sequence length="173" mass="18067">MTYFMLFLGLCFVLGGLAVASNPSPYYGVVGLVLASVVGCGWLLSLGVSFVSLVLFMVYLGGMLVVFVYSVSLAADPFPEAWGDWRVVGYGVSFIVVLAAGAVVGGLAGCWDLGVITVDSVGMFSVRLDFSGVAMFYSCGVGMFLVAGWGLLLTLFVVLELVRGLSCGAIRAV</sequence>
<keyword id="KW-0249">Electron transport</keyword>
<keyword id="KW-0472">Membrane</keyword>
<keyword id="KW-0496">Mitochondrion</keyword>
<keyword id="KW-0520">NAD</keyword>
<keyword id="KW-0679">Respiratory chain</keyword>
<keyword id="KW-1278">Translocase</keyword>
<keyword id="KW-0812">Transmembrane</keyword>
<keyword id="KW-1133">Transmembrane helix</keyword>
<keyword id="KW-0813">Transport</keyword>
<keyword id="KW-0830">Ubiquinone</keyword>
<dbReference type="EC" id="7.1.1.2"/>
<dbReference type="EMBL" id="X73919">
    <property type="protein sequence ID" value="CAA52124.1"/>
    <property type="molecule type" value="Genomic_DNA"/>
</dbReference>
<dbReference type="PIR" id="S44400">
    <property type="entry name" value="S44400"/>
</dbReference>
<dbReference type="RefSeq" id="YP_009230524.1">
    <property type="nucleotide sequence ID" value="NC_029328.1"/>
</dbReference>
<dbReference type="GeneID" id="26887701"/>
<dbReference type="CTD" id="4541"/>
<dbReference type="GO" id="GO:0031966">
    <property type="term" value="C:mitochondrial membrane"/>
    <property type="evidence" value="ECO:0007669"/>
    <property type="project" value="UniProtKB-SubCell"/>
</dbReference>
<dbReference type="GO" id="GO:0008137">
    <property type="term" value="F:NADH dehydrogenase (ubiquinone) activity"/>
    <property type="evidence" value="ECO:0007669"/>
    <property type="project" value="UniProtKB-EC"/>
</dbReference>
<dbReference type="Gene3D" id="1.20.120.1200">
    <property type="entry name" value="NADH-ubiquinone/plastoquinone oxidoreductase chain 6, subunit NuoJ"/>
    <property type="match status" value="1"/>
</dbReference>
<dbReference type="InterPro" id="IPR050269">
    <property type="entry name" value="ComplexI_Subunit6"/>
</dbReference>
<dbReference type="InterPro" id="IPR001457">
    <property type="entry name" value="NADH_UbQ/plastoQ_OxRdtase_su6"/>
</dbReference>
<dbReference type="InterPro" id="IPR042106">
    <property type="entry name" value="Nuo/plastoQ_OxRdtase_6_NuoJ"/>
</dbReference>
<dbReference type="PANTHER" id="PTHR11435">
    <property type="entry name" value="NADH UBIQUINONE OXIDOREDUCTASE SUBUNIT ND6"/>
    <property type="match status" value="1"/>
</dbReference>
<dbReference type="PANTHER" id="PTHR11435:SF1">
    <property type="entry name" value="NADH-UBIQUINONE OXIDOREDUCTASE CHAIN 6"/>
    <property type="match status" value="1"/>
</dbReference>
<dbReference type="Pfam" id="PF00499">
    <property type="entry name" value="Oxidored_q3"/>
    <property type="match status" value="1"/>
</dbReference>
<name>NU6M_SYNWU</name>
<feature type="chain" id="PRO_0000118340" description="NADH-ubiquinone oxidoreductase chain 6">
    <location>
        <begin position="1"/>
        <end position="173"/>
    </location>
</feature>
<feature type="transmembrane region" description="Helical" evidence="2">
    <location>
        <begin position="1"/>
        <end position="21"/>
    </location>
</feature>
<feature type="transmembrane region" description="Helical" evidence="2">
    <location>
        <begin position="27"/>
        <end position="47"/>
    </location>
</feature>
<feature type="transmembrane region" description="Helical" evidence="2">
    <location>
        <begin position="48"/>
        <end position="68"/>
    </location>
</feature>
<feature type="transmembrane region" description="Helical" evidence="2">
    <location>
        <begin position="87"/>
        <end position="107"/>
    </location>
</feature>
<feature type="transmembrane region" description="Helical" evidence="2">
    <location>
        <begin position="139"/>
        <end position="159"/>
    </location>
</feature>
<gene>
    <name type="primary">MT-ND6</name>
    <name type="synonym">MTND6</name>
    <name type="synonym">NADH6</name>
    <name type="synonym">ND6</name>
</gene>